<reference key="1">
    <citation type="submission" date="1997-01" db="EMBL/GenBank/DDBJ databases">
        <authorList>
            <person name="Miranda-Vizuete A."/>
            <person name="Gustafsson J.-A."/>
            <person name="Spyrou G."/>
        </authorList>
    </citation>
    <scope>NUCLEOTIDE SEQUENCE [MRNA]</scope>
</reference>
<reference key="2">
    <citation type="journal article" date="2005" name="Science">
        <title>The transcriptional landscape of the mammalian genome.</title>
        <authorList>
            <person name="Carninci P."/>
            <person name="Kasukawa T."/>
            <person name="Katayama S."/>
            <person name="Gough J."/>
            <person name="Frith M.C."/>
            <person name="Maeda N."/>
            <person name="Oyama R."/>
            <person name="Ravasi T."/>
            <person name="Lenhard B."/>
            <person name="Wells C."/>
            <person name="Kodzius R."/>
            <person name="Shimokawa K."/>
            <person name="Bajic V.B."/>
            <person name="Brenner S.E."/>
            <person name="Batalov S."/>
            <person name="Forrest A.R."/>
            <person name="Zavolan M."/>
            <person name="Davis M.J."/>
            <person name="Wilming L.G."/>
            <person name="Aidinis V."/>
            <person name="Allen J.E."/>
            <person name="Ambesi-Impiombato A."/>
            <person name="Apweiler R."/>
            <person name="Aturaliya R.N."/>
            <person name="Bailey T.L."/>
            <person name="Bansal M."/>
            <person name="Baxter L."/>
            <person name="Beisel K.W."/>
            <person name="Bersano T."/>
            <person name="Bono H."/>
            <person name="Chalk A.M."/>
            <person name="Chiu K.P."/>
            <person name="Choudhary V."/>
            <person name="Christoffels A."/>
            <person name="Clutterbuck D.R."/>
            <person name="Crowe M.L."/>
            <person name="Dalla E."/>
            <person name="Dalrymple B.P."/>
            <person name="de Bono B."/>
            <person name="Della Gatta G."/>
            <person name="di Bernardo D."/>
            <person name="Down T."/>
            <person name="Engstrom P."/>
            <person name="Fagiolini M."/>
            <person name="Faulkner G."/>
            <person name="Fletcher C.F."/>
            <person name="Fukushima T."/>
            <person name="Furuno M."/>
            <person name="Futaki S."/>
            <person name="Gariboldi M."/>
            <person name="Georgii-Hemming P."/>
            <person name="Gingeras T.R."/>
            <person name="Gojobori T."/>
            <person name="Green R.E."/>
            <person name="Gustincich S."/>
            <person name="Harbers M."/>
            <person name="Hayashi Y."/>
            <person name="Hensch T.K."/>
            <person name="Hirokawa N."/>
            <person name="Hill D."/>
            <person name="Huminiecki L."/>
            <person name="Iacono M."/>
            <person name="Ikeo K."/>
            <person name="Iwama A."/>
            <person name="Ishikawa T."/>
            <person name="Jakt M."/>
            <person name="Kanapin A."/>
            <person name="Katoh M."/>
            <person name="Kawasawa Y."/>
            <person name="Kelso J."/>
            <person name="Kitamura H."/>
            <person name="Kitano H."/>
            <person name="Kollias G."/>
            <person name="Krishnan S.P."/>
            <person name="Kruger A."/>
            <person name="Kummerfeld S.K."/>
            <person name="Kurochkin I.V."/>
            <person name="Lareau L.F."/>
            <person name="Lazarevic D."/>
            <person name="Lipovich L."/>
            <person name="Liu J."/>
            <person name="Liuni S."/>
            <person name="McWilliam S."/>
            <person name="Madan Babu M."/>
            <person name="Madera M."/>
            <person name="Marchionni L."/>
            <person name="Matsuda H."/>
            <person name="Matsuzawa S."/>
            <person name="Miki H."/>
            <person name="Mignone F."/>
            <person name="Miyake S."/>
            <person name="Morris K."/>
            <person name="Mottagui-Tabar S."/>
            <person name="Mulder N."/>
            <person name="Nakano N."/>
            <person name="Nakauchi H."/>
            <person name="Ng P."/>
            <person name="Nilsson R."/>
            <person name="Nishiguchi S."/>
            <person name="Nishikawa S."/>
            <person name="Nori F."/>
            <person name="Ohara O."/>
            <person name="Okazaki Y."/>
            <person name="Orlando V."/>
            <person name="Pang K.C."/>
            <person name="Pavan W.J."/>
            <person name="Pavesi G."/>
            <person name="Pesole G."/>
            <person name="Petrovsky N."/>
            <person name="Piazza S."/>
            <person name="Reed J."/>
            <person name="Reid J.F."/>
            <person name="Ring B.Z."/>
            <person name="Ringwald M."/>
            <person name="Rost B."/>
            <person name="Ruan Y."/>
            <person name="Salzberg S.L."/>
            <person name="Sandelin A."/>
            <person name="Schneider C."/>
            <person name="Schoenbach C."/>
            <person name="Sekiguchi K."/>
            <person name="Semple C.A."/>
            <person name="Seno S."/>
            <person name="Sessa L."/>
            <person name="Sheng Y."/>
            <person name="Shibata Y."/>
            <person name="Shimada H."/>
            <person name="Shimada K."/>
            <person name="Silva D."/>
            <person name="Sinclair B."/>
            <person name="Sperling S."/>
            <person name="Stupka E."/>
            <person name="Sugiura K."/>
            <person name="Sultana R."/>
            <person name="Takenaka Y."/>
            <person name="Taki K."/>
            <person name="Tammoja K."/>
            <person name="Tan S.L."/>
            <person name="Tang S."/>
            <person name="Taylor M.S."/>
            <person name="Tegner J."/>
            <person name="Teichmann S.A."/>
            <person name="Ueda H.R."/>
            <person name="van Nimwegen E."/>
            <person name="Verardo R."/>
            <person name="Wei C.L."/>
            <person name="Yagi K."/>
            <person name="Yamanishi H."/>
            <person name="Zabarovsky E."/>
            <person name="Zhu S."/>
            <person name="Zimmer A."/>
            <person name="Hide W."/>
            <person name="Bult C."/>
            <person name="Grimmond S.M."/>
            <person name="Teasdale R.D."/>
            <person name="Liu E.T."/>
            <person name="Brusic V."/>
            <person name="Quackenbush J."/>
            <person name="Wahlestedt C."/>
            <person name="Mattick J.S."/>
            <person name="Hume D.A."/>
            <person name="Kai C."/>
            <person name="Sasaki D."/>
            <person name="Tomaru Y."/>
            <person name="Fukuda S."/>
            <person name="Kanamori-Katayama M."/>
            <person name="Suzuki M."/>
            <person name="Aoki J."/>
            <person name="Arakawa T."/>
            <person name="Iida J."/>
            <person name="Imamura K."/>
            <person name="Itoh M."/>
            <person name="Kato T."/>
            <person name="Kawaji H."/>
            <person name="Kawagashira N."/>
            <person name="Kawashima T."/>
            <person name="Kojima M."/>
            <person name="Kondo S."/>
            <person name="Konno H."/>
            <person name="Nakano K."/>
            <person name="Ninomiya N."/>
            <person name="Nishio T."/>
            <person name="Okada M."/>
            <person name="Plessy C."/>
            <person name="Shibata K."/>
            <person name="Shiraki T."/>
            <person name="Suzuki S."/>
            <person name="Tagami M."/>
            <person name="Waki K."/>
            <person name="Watahiki A."/>
            <person name="Okamura-Oho Y."/>
            <person name="Suzuki H."/>
            <person name="Kawai J."/>
            <person name="Hayashizaki Y."/>
        </authorList>
    </citation>
    <scope>NUCLEOTIDE SEQUENCE [LARGE SCALE MRNA]</scope>
    <source>
        <strain>C57BL/6J</strain>
        <strain>DBA/2J</strain>
        <tissue>Bone marrow</tissue>
        <tissue>Kidney</tissue>
        <tissue>Liver</tissue>
    </source>
</reference>
<reference key="3">
    <citation type="journal article" date="2009" name="PLoS Biol.">
        <title>Lineage-specific biology revealed by a finished genome assembly of the mouse.</title>
        <authorList>
            <person name="Church D.M."/>
            <person name="Goodstadt L."/>
            <person name="Hillier L.W."/>
            <person name="Zody M.C."/>
            <person name="Goldstein S."/>
            <person name="She X."/>
            <person name="Bult C.J."/>
            <person name="Agarwala R."/>
            <person name="Cherry J.L."/>
            <person name="DiCuccio M."/>
            <person name="Hlavina W."/>
            <person name="Kapustin Y."/>
            <person name="Meric P."/>
            <person name="Maglott D."/>
            <person name="Birtle Z."/>
            <person name="Marques A.C."/>
            <person name="Graves T."/>
            <person name="Zhou S."/>
            <person name="Teague B."/>
            <person name="Potamousis K."/>
            <person name="Churas C."/>
            <person name="Place M."/>
            <person name="Herschleb J."/>
            <person name="Runnheim R."/>
            <person name="Forrest D."/>
            <person name="Amos-Landgraf J."/>
            <person name="Schwartz D.C."/>
            <person name="Cheng Z."/>
            <person name="Lindblad-Toh K."/>
            <person name="Eichler E.E."/>
            <person name="Ponting C.P."/>
        </authorList>
    </citation>
    <scope>NUCLEOTIDE SEQUENCE [LARGE SCALE GENOMIC DNA]</scope>
    <source>
        <strain>C57BL/6J</strain>
    </source>
</reference>
<reference key="4">
    <citation type="journal article" date="2004" name="Genome Res.">
        <title>The status, quality, and expansion of the NIH full-length cDNA project: the Mammalian Gene Collection (MGC).</title>
        <authorList>
            <consortium name="The MGC Project Team"/>
        </authorList>
    </citation>
    <scope>NUCLEOTIDE SEQUENCE [LARGE SCALE MRNA]</scope>
    <source>
        <strain>C57BL/6J</strain>
        <tissue>Brain</tissue>
    </source>
</reference>
<reference key="5">
    <citation type="journal article" date="2003" name="Mol. Cell. Biol.">
        <title>The absence of mitochondrial thioredoxin 2 causes massive apoptosis, exencephaly, and early embryonic lethality in homozygous mice.</title>
        <authorList>
            <person name="Nonn L."/>
            <person name="Williams R.R."/>
            <person name="Erickson R.P."/>
            <person name="Powis G."/>
        </authorList>
    </citation>
    <scope>FUNCTION</scope>
</reference>
<reference key="6">
    <citation type="journal article" date="2010" name="Cell">
        <title>A tissue-specific atlas of mouse protein phosphorylation and expression.</title>
        <authorList>
            <person name="Huttlin E.L."/>
            <person name="Jedrychowski M.P."/>
            <person name="Elias J.E."/>
            <person name="Goswami T."/>
            <person name="Rad R."/>
            <person name="Beausoleil S.A."/>
            <person name="Villen J."/>
            <person name="Haas W."/>
            <person name="Sowa M.E."/>
            <person name="Gygi S.P."/>
        </authorList>
    </citation>
    <scope>IDENTIFICATION BY MASS SPECTROMETRY [LARGE SCALE ANALYSIS]</scope>
    <source>
        <tissue>Brain</tissue>
        <tissue>Brown adipose tissue</tissue>
        <tissue>Heart</tissue>
        <tissue>Kidney</tissue>
        <tissue>Liver</tissue>
        <tissue>Lung</tissue>
        <tissue>Pancreas</tissue>
        <tissue>Spleen</tissue>
        <tissue>Testis</tissue>
    </source>
</reference>
<reference key="7">
    <citation type="journal article" date="2013" name="Mol. Cell">
        <title>SIRT5-mediated lysine desuccinylation impacts diverse metabolic pathways.</title>
        <authorList>
            <person name="Park J."/>
            <person name="Chen Y."/>
            <person name="Tishkoff D.X."/>
            <person name="Peng C."/>
            <person name="Tan M."/>
            <person name="Dai L."/>
            <person name="Xie Z."/>
            <person name="Zhang Y."/>
            <person name="Zwaans B.M."/>
            <person name="Skinner M.E."/>
            <person name="Lombard D.B."/>
            <person name="Zhao Y."/>
        </authorList>
    </citation>
    <scope>SUCCINYLATION [LARGE SCALE ANALYSIS] AT LYS-152</scope>
    <scope>IDENTIFICATION BY MASS SPECTROMETRY [LARGE SCALE ANALYSIS]</scope>
    <source>
        <tissue>Liver</tissue>
    </source>
</reference>
<keyword id="KW-0007">Acetylation</keyword>
<keyword id="KW-1015">Disulfide bond</keyword>
<keyword id="KW-0249">Electron transport</keyword>
<keyword id="KW-0496">Mitochondrion</keyword>
<keyword id="KW-0676">Redox-active center</keyword>
<keyword id="KW-1185">Reference proteome</keyword>
<keyword id="KW-0809">Transit peptide</keyword>
<keyword id="KW-0813">Transport</keyword>
<organism>
    <name type="scientific">Mus musculus</name>
    <name type="common">Mouse</name>
    <dbReference type="NCBI Taxonomy" id="10090"/>
    <lineage>
        <taxon>Eukaryota</taxon>
        <taxon>Metazoa</taxon>
        <taxon>Chordata</taxon>
        <taxon>Craniata</taxon>
        <taxon>Vertebrata</taxon>
        <taxon>Euteleostomi</taxon>
        <taxon>Mammalia</taxon>
        <taxon>Eutheria</taxon>
        <taxon>Euarchontoglires</taxon>
        <taxon>Glires</taxon>
        <taxon>Rodentia</taxon>
        <taxon>Myomorpha</taxon>
        <taxon>Muroidea</taxon>
        <taxon>Muridae</taxon>
        <taxon>Murinae</taxon>
        <taxon>Mus</taxon>
        <taxon>Mus</taxon>
    </lineage>
</organism>
<gene>
    <name type="primary">Txn2</name>
</gene>
<comment type="function">
    <text evidence="3 4 6">Important for the control of mitochondrial reactive oxygen species homeostasis, apoptosis regulation and cell viability. Is involved in various redox reactions including the reduction of protein disulfide bonds, through the reversible oxidation of its active center dithiol to a disulfide.</text>
</comment>
<comment type="subunit">
    <text evidence="4">Monomer.</text>
</comment>
<comment type="subcellular location">
    <subcellularLocation>
        <location evidence="3">Mitochondrion</location>
    </subcellularLocation>
</comment>
<comment type="similarity">
    <text evidence="7">Belongs to the thioredoxin family.</text>
</comment>
<accession>P97493</accession>
<accession>A2A440</accession>
<accession>Q545D5</accession>
<protein>
    <recommendedName>
        <fullName>Thioredoxin, mitochondrial</fullName>
        <shortName>MTRX</shortName>
        <shortName>Mt-Trx</shortName>
    </recommendedName>
    <alternativeName>
        <fullName>Thioredoxin-2</fullName>
    </alternativeName>
</protein>
<dbReference type="EMBL" id="U85089">
    <property type="protein sequence ID" value="AAB41900.1"/>
    <property type="molecule type" value="mRNA"/>
</dbReference>
<dbReference type="EMBL" id="AK002358">
    <property type="protein sequence ID" value="BAB22037.1"/>
    <property type="molecule type" value="mRNA"/>
</dbReference>
<dbReference type="EMBL" id="AK010917">
    <property type="protein sequence ID" value="BAB27267.1"/>
    <property type="molecule type" value="mRNA"/>
</dbReference>
<dbReference type="EMBL" id="AK147164">
    <property type="protein sequence ID" value="BAE27729.1"/>
    <property type="molecule type" value="mRNA"/>
</dbReference>
<dbReference type="EMBL" id="AK149855">
    <property type="protein sequence ID" value="BAE29126.1"/>
    <property type="molecule type" value="mRNA"/>
</dbReference>
<dbReference type="EMBL" id="AK167754">
    <property type="protein sequence ID" value="BAE39789.1"/>
    <property type="molecule type" value="mRNA"/>
</dbReference>
<dbReference type="EMBL" id="AK167925">
    <property type="protein sequence ID" value="BAE39930.1"/>
    <property type="molecule type" value="mRNA"/>
</dbReference>
<dbReference type="EMBL" id="AK168322">
    <property type="protein sequence ID" value="BAE40261.1"/>
    <property type="molecule type" value="mRNA"/>
</dbReference>
<dbReference type="EMBL" id="AL583886">
    <property type="status" value="NOT_ANNOTATED_CDS"/>
    <property type="molecule type" value="Genomic_DNA"/>
</dbReference>
<dbReference type="EMBL" id="BC068182">
    <property type="protein sequence ID" value="AAH68182.1"/>
    <property type="molecule type" value="mRNA"/>
</dbReference>
<dbReference type="CCDS" id="CCDS27606.1"/>
<dbReference type="RefSeq" id="NP_064297.1">
    <property type="nucleotide sequence ID" value="NM_019913.5"/>
</dbReference>
<dbReference type="SMR" id="P97493"/>
<dbReference type="BioGRID" id="208053">
    <property type="interactions" value="7"/>
</dbReference>
<dbReference type="FunCoup" id="P97493">
    <property type="interactions" value="1368"/>
</dbReference>
<dbReference type="IntAct" id="P97493">
    <property type="interactions" value="168"/>
</dbReference>
<dbReference type="STRING" id="10090.ENSMUSP00000105370"/>
<dbReference type="iPTMnet" id="P97493"/>
<dbReference type="PhosphoSitePlus" id="P97493"/>
<dbReference type="SwissPalm" id="P97493"/>
<dbReference type="jPOST" id="P97493"/>
<dbReference type="PaxDb" id="10090-ENSMUSP00000005487"/>
<dbReference type="PeptideAtlas" id="P97493"/>
<dbReference type="ProteomicsDB" id="258873"/>
<dbReference type="Pumba" id="P97493"/>
<dbReference type="Antibodypedia" id="232">
    <property type="antibodies" value="392 antibodies from 35 providers"/>
</dbReference>
<dbReference type="DNASU" id="56551"/>
<dbReference type="Ensembl" id="ENSMUST00000005487.12">
    <property type="protein sequence ID" value="ENSMUSP00000005487.6"/>
    <property type="gene ID" value="ENSMUSG00000005354.17"/>
</dbReference>
<dbReference type="Ensembl" id="ENSMUST00000109748.9">
    <property type="protein sequence ID" value="ENSMUSP00000105370.3"/>
    <property type="gene ID" value="ENSMUSG00000005354.17"/>
</dbReference>
<dbReference type="GeneID" id="56551"/>
<dbReference type="KEGG" id="mmu:56551"/>
<dbReference type="UCSC" id="uc007wof.1">
    <property type="organism name" value="mouse"/>
</dbReference>
<dbReference type="AGR" id="MGI:1929468"/>
<dbReference type="CTD" id="25828"/>
<dbReference type="MGI" id="MGI:1929468">
    <property type="gene designation" value="Txn2"/>
</dbReference>
<dbReference type="VEuPathDB" id="HostDB:ENSMUSG00000005354"/>
<dbReference type="eggNOG" id="KOG0910">
    <property type="taxonomic scope" value="Eukaryota"/>
</dbReference>
<dbReference type="GeneTree" id="ENSGT00530000064086"/>
<dbReference type="HOGENOM" id="CLU_090389_11_1_1"/>
<dbReference type="InParanoid" id="P97493"/>
<dbReference type="OMA" id="VLVIMQN"/>
<dbReference type="OrthoDB" id="9983at9989"/>
<dbReference type="PhylomeDB" id="P97493"/>
<dbReference type="TreeFam" id="TF314517"/>
<dbReference type="Reactome" id="R-MMU-1614558">
    <property type="pathway name" value="Degradation of cysteine and homocysteine"/>
</dbReference>
<dbReference type="Reactome" id="R-MMU-3299685">
    <property type="pathway name" value="Detoxification of Reactive Oxygen Species"/>
</dbReference>
<dbReference type="BioGRID-ORCS" id="56551">
    <property type="hits" value="18 hits in 79 CRISPR screens"/>
</dbReference>
<dbReference type="ChiTaRS" id="Txn2">
    <property type="organism name" value="mouse"/>
</dbReference>
<dbReference type="PRO" id="PR:P97493"/>
<dbReference type="Proteomes" id="UP000000589">
    <property type="component" value="Chromosome 15"/>
</dbReference>
<dbReference type="RNAct" id="P97493">
    <property type="molecule type" value="protein"/>
</dbReference>
<dbReference type="Bgee" id="ENSMUSG00000005354">
    <property type="expression patterns" value="Expressed in right kidney and 268 other cell types or tissues"/>
</dbReference>
<dbReference type="ExpressionAtlas" id="P97493">
    <property type="expression patterns" value="baseline and differential"/>
</dbReference>
<dbReference type="GO" id="GO:0005739">
    <property type="term" value="C:mitochondrion"/>
    <property type="evidence" value="ECO:0007005"/>
    <property type="project" value="MGI"/>
</dbReference>
<dbReference type="GO" id="GO:0005730">
    <property type="term" value="C:nucleolus"/>
    <property type="evidence" value="ECO:0007669"/>
    <property type="project" value="Ensembl"/>
</dbReference>
<dbReference type="GO" id="GO:0015035">
    <property type="term" value="F:protein-disulfide reductase activity"/>
    <property type="evidence" value="ECO:0007669"/>
    <property type="project" value="InterPro"/>
</dbReference>
<dbReference type="CDD" id="cd02947">
    <property type="entry name" value="TRX_family"/>
    <property type="match status" value="1"/>
</dbReference>
<dbReference type="FunFam" id="3.40.30.10:FF:000001">
    <property type="entry name" value="Thioredoxin"/>
    <property type="match status" value="1"/>
</dbReference>
<dbReference type="Gene3D" id="3.40.30.10">
    <property type="entry name" value="Glutaredoxin"/>
    <property type="match status" value="1"/>
</dbReference>
<dbReference type="InterPro" id="IPR005746">
    <property type="entry name" value="Thioredoxin"/>
</dbReference>
<dbReference type="InterPro" id="IPR036249">
    <property type="entry name" value="Thioredoxin-like_sf"/>
</dbReference>
<dbReference type="InterPro" id="IPR017937">
    <property type="entry name" value="Thioredoxin_CS"/>
</dbReference>
<dbReference type="InterPro" id="IPR013766">
    <property type="entry name" value="Thioredoxin_domain"/>
</dbReference>
<dbReference type="NCBIfam" id="TIGR01068">
    <property type="entry name" value="thioredoxin"/>
    <property type="match status" value="1"/>
</dbReference>
<dbReference type="PANTHER" id="PTHR43601">
    <property type="entry name" value="THIOREDOXIN, MITOCHONDRIAL"/>
    <property type="match status" value="1"/>
</dbReference>
<dbReference type="PANTHER" id="PTHR43601:SF3">
    <property type="entry name" value="THIOREDOXIN, MITOCHONDRIAL"/>
    <property type="match status" value="1"/>
</dbReference>
<dbReference type="Pfam" id="PF00085">
    <property type="entry name" value="Thioredoxin"/>
    <property type="match status" value="1"/>
</dbReference>
<dbReference type="PRINTS" id="PR00421">
    <property type="entry name" value="THIOREDOXIN"/>
</dbReference>
<dbReference type="SUPFAM" id="SSF52833">
    <property type="entry name" value="Thioredoxin-like"/>
    <property type="match status" value="1"/>
</dbReference>
<dbReference type="PROSITE" id="PS00194">
    <property type="entry name" value="THIOREDOXIN_1"/>
    <property type="match status" value="1"/>
</dbReference>
<dbReference type="PROSITE" id="PS51352">
    <property type="entry name" value="THIOREDOXIN_2"/>
    <property type="match status" value="1"/>
</dbReference>
<feature type="transit peptide" description="Mitochondrion" evidence="1">
    <location>
        <begin position="1"/>
        <end position="59"/>
    </location>
</feature>
<feature type="chain" id="PRO_0000034151" description="Thioredoxin, mitochondrial">
    <location>
        <begin position="60"/>
        <end position="166"/>
    </location>
</feature>
<feature type="domain" description="Thioredoxin" evidence="5">
    <location>
        <begin position="61"/>
        <end position="166"/>
    </location>
</feature>
<feature type="active site" description="Nucleophile" evidence="2">
    <location>
        <position position="90"/>
    </location>
</feature>
<feature type="active site" description="Nucleophile" evidence="2">
    <location>
        <position position="93"/>
    </location>
</feature>
<feature type="site" description="Deprotonates C-terminal active site Cys" evidence="2">
    <location>
        <position position="84"/>
    </location>
</feature>
<feature type="site" description="Contributes to redox potential value" evidence="2">
    <location>
        <position position="91"/>
    </location>
</feature>
<feature type="site" description="Contributes to redox potential value" evidence="2">
    <location>
        <position position="92"/>
    </location>
</feature>
<feature type="modified residue" description="N6-acetyllysine; alternate" evidence="4">
    <location>
        <position position="152"/>
    </location>
</feature>
<feature type="modified residue" description="N6-succinyllysine; alternate" evidence="8">
    <location>
        <position position="152"/>
    </location>
</feature>
<feature type="disulfide bond" description="Redox-active" evidence="5">
    <location>
        <begin position="90"/>
        <end position="93"/>
    </location>
</feature>
<name>THIOM_MOUSE</name>
<evidence type="ECO:0000250" key="1"/>
<evidence type="ECO:0000250" key="2">
    <source>
        <dbReference type="UniProtKB" id="P10599"/>
    </source>
</evidence>
<evidence type="ECO:0000250" key="3">
    <source>
        <dbReference type="UniProtKB" id="P97615"/>
    </source>
</evidence>
<evidence type="ECO:0000250" key="4">
    <source>
        <dbReference type="UniProtKB" id="Q99757"/>
    </source>
</evidence>
<evidence type="ECO:0000255" key="5">
    <source>
        <dbReference type="PROSITE-ProRule" id="PRU00691"/>
    </source>
</evidence>
<evidence type="ECO:0000269" key="6">
    <source>
    </source>
</evidence>
<evidence type="ECO:0000305" key="7"/>
<evidence type="ECO:0007744" key="8">
    <source>
    </source>
</evidence>
<proteinExistence type="evidence at protein level"/>
<sequence length="166" mass="18255">MAQRLLLGRFLTSVISRKPPQGVWASLTSKTLQTPQYNAGGLTVMPSPARTVHTTRVCLTTFNVQDGPDFQDRVVNSETPVVVDFHAQWCGPCKILGPRLEKMVAKQHGKVVMAKVDIDDHTDLAIEYEVSAVPTVLAIKNGDVVDKFVGIKDEDQLEAFLKKLIG</sequence>